<keyword id="KW-0240">DNA-directed RNA polymerase</keyword>
<keyword id="KW-0548">Nucleotidyltransferase</keyword>
<keyword id="KW-1185">Reference proteome</keyword>
<keyword id="KW-0804">Transcription</keyword>
<keyword id="KW-0808">Transferase</keyword>
<sequence>MAYSFTEKKRIRKDFGKSQSILAVPYLLATQMDSYREFLQESVPPAARKETGLEAVFRSVFPMESYSGNAMLDYVSYRLEKPVFDVVECRQRGLTYCAGLRVRLRLAVMEKDDTTGAKRVKDVKEQDVYMGELPLMTEHGSFVINGTERVIVSQLHRSPGVFFDHDRGKTHSSGKLLFNARIIPYRGSWLDFEFDPKDHVYARIDRRRKLPATTLLRALGYSTQDILEMFFDMETFRLIDGDLRYVLIPQRLQGEVAAFDIVSPETGDVLVQAGKRITVRQTKALSEVQGLHEIPVPDSFLLGKVVARDIVHPETGEVVVQANEPVSGELLDALRKMPSLTLHTLYLNELDRGPYISETLRIDTSRDAHDAQMEIYRLMRPGEPPTKDAAQNLFQGLFFSPDRYDLSAVGRMKFNRRVGRDEITGPGVLNDADIIAVLKVLVALRNGVGEIDDIDHLGNRRVRSVGELMENQFRLGLVRVERAVKDRLALAESEGLTPQDLINAKPIAAVVNEFFGSSQLSQFMDQTNPLSEVTHKRRVSALGPGGLTRERAGFEVRDVHPTHYGRICPIETPEGPNIGLINSLSCYARTNSYGFLETPYRRVVDRRTTDEVEYLSAIEEGNYMIAQANSTVDEHGVLTDELVSCRFKNEFTLANPDQVQFMDISPRQIVSVAASMIPFLEHDDANRALMGSNMQRQAVPTVRSDAPMVGTGMERVVAIDSGAAVVARRGGVVDIVDGARIVIRVSDEETLPEEPGVDIYNLVKYARSNQNTTLNQRPVVKVGDVVSRGDVLADGPSTEMGELALGQNILVAFMPWNGYNFEDSILISERVVAEDRYTTIHIEEFSVFARDTKLGPEEITRDIPNVAEGALRHLDESGIVVIGAELAPGDILVGKVTPKGETQLTPEEKLLRAIFGEKASDVKDNSMRMPAGMYGTVIDVQVFTRDGIEKDARAKSIEEHELARIRKDLNDQYRIVEEDSYQRIERQLIGKVAEGGPNGLAAGNKVTKAYLKDLPRAKWFEIRLRTEESNESLEQIRAQLEEQRQRLDAVLEEKRRKLTQGDDLSPGVLKMVKVHVAIKRHLQPGDKMAGRHGNKGVVSKIVPVEDMPYLADGTAVDIVLNPLGVPSRMNVGQILETHLGWAAKGLGKKIGAMLDSEVAMAEMRAFLAEIYNRSGKKEDLDSLTDQEIRELSANLRGGVPMATPVFDGASEEEIGDMLELAGLPRSGQVTLYDGRSGDAFDRPVTVGYLYMLKLHHLVDDKMHARSTGPYSLVTQQPLGGKAQFGGQRFGEMEVWALEAYGAAYTLQEMLTVKSDDVSGRSKMYESIVKGDFRMDAGMPESFNVLLKELRSLGIDIELEQSK</sequence>
<organism>
    <name type="scientific">Acidithiobacillus ferrooxidans (strain ATCC 23270 / DSM 14882 / CIP 104768 / NCIMB 8455)</name>
    <name type="common">Ferrobacillus ferrooxidans (strain ATCC 23270)</name>
    <dbReference type="NCBI Taxonomy" id="243159"/>
    <lineage>
        <taxon>Bacteria</taxon>
        <taxon>Pseudomonadati</taxon>
        <taxon>Pseudomonadota</taxon>
        <taxon>Acidithiobacillia</taxon>
        <taxon>Acidithiobacillales</taxon>
        <taxon>Acidithiobacillaceae</taxon>
        <taxon>Acidithiobacillus</taxon>
    </lineage>
</organism>
<accession>B7J460</accession>
<comment type="function">
    <text evidence="1">DNA-dependent RNA polymerase catalyzes the transcription of DNA into RNA using the four ribonucleoside triphosphates as substrates.</text>
</comment>
<comment type="catalytic activity">
    <reaction evidence="1">
        <text>RNA(n) + a ribonucleoside 5'-triphosphate = RNA(n+1) + diphosphate</text>
        <dbReference type="Rhea" id="RHEA:21248"/>
        <dbReference type="Rhea" id="RHEA-COMP:14527"/>
        <dbReference type="Rhea" id="RHEA-COMP:17342"/>
        <dbReference type="ChEBI" id="CHEBI:33019"/>
        <dbReference type="ChEBI" id="CHEBI:61557"/>
        <dbReference type="ChEBI" id="CHEBI:140395"/>
        <dbReference type="EC" id="2.7.7.6"/>
    </reaction>
</comment>
<comment type="subunit">
    <text evidence="1">The RNAP catalytic core consists of 2 alpha, 1 beta, 1 beta' and 1 omega subunit. When a sigma factor is associated with the core the holoenzyme is formed, which can initiate transcription.</text>
</comment>
<comment type="similarity">
    <text evidence="1">Belongs to the RNA polymerase beta chain family.</text>
</comment>
<dbReference type="EC" id="2.7.7.6" evidence="1"/>
<dbReference type="EMBL" id="CP001219">
    <property type="protein sequence ID" value="ACK79513.1"/>
    <property type="molecule type" value="Genomic_DNA"/>
</dbReference>
<dbReference type="RefSeq" id="WP_012536082.1">
    <property type="nucleotide sequence ID" value="NC_011761.1"/>
</dbReference>
<dbReference type="SMR" id="B7J460"/>
<dbReference type="STRING" id="243159.AFE_0320"/>
<dbReference type="PaxDb" id="243159-AFE_0320"/>
<dbReference type="GeneID" id="65279699"/>
<dbReference type="KEGG" id="afr:AFE_0320"/>
<dbReference type="eggNOG" id="COG0085">
    <property type="taxonomic scope" value="Bacteria"/>
</dbReference>
<dbReference type="HOGENOM" id="CLU_000524_4_1_6"/>
<dbReference type="Proteomes" id="UP000001362">
    <property type="component" value="Chromosome"/>
</dbReference>
<dbReference type="GO" id="GO:0000428">
    <property type="term" value="C:DNA-directed RNA polymerase complex"/>
    <property type="evidence" value="ECO:0007669"/>
    <property type="project" value="UniProtKB-KW"/>
</dbReference>
<dbReference type="GO" id="GO:0003677">
    <property type="term" value="F:DNA binding"/>
    <property type="evidence" value="ECO:0007669"/>
    <property type="project" value="UniProtKB-UniRule"/>
</dbReference>
<dbReference type="GO" id="GO:0003899">
    <property type="term" value="F:DNA-directed RNA polymerase activity"/>
    <property type="evidence" value="ECO:0007669"/>
    <property type="project" value="UniProtKB-UniRule"/>
</dbReference>
<dbReference type="GO" id="GO:0032549">
    <property type="term" value="F:ribonucleoside binding"/>
    <property type="evidence" value="ECO:0007669"/>
    <property type="project" value="InterPro"/>
</dbReference>
<dbReference type="GO" id="GO:0006351">
    <property type="term" value="P:DNA-templated transcription"/>
    <property type="evidence" value="ECO:0007669"/>
    <property type="project" value="UniProtKB-UniRule"/>
</dbReference>
<dbReference type="CDD" id="cd00653">
    <property type="entry name" value="RNA_pol_B_RPB2"/>
    <property type="match status" value="1"/>
</dbReference>
<dbReference type="FunFam" id="2.40.50.100:FF:000006">
    <property type="entry name" value="DNA-directed RNA polymerase subunit beta"/>
    <property type="match status" value="1"/>
</dbReference>
<dbReference type="FunFam" id="3.90.1800.10:FF:000001">
    <property type="entry name" value="DNA-directed RNA polymerase subunit beta"/>
    <property type="match status" value="1"/>
</dbReference>
<dbReference type="Gene3D" id="2.40.50.100">
    <property type="match status" value="1"/>
</dbReference>
<dbReference type="Gene3D" id="2.40.50.150">
    <property type="match status" value="1"/>
</dbReference>
<dbReference type="Gene3D" id="3.90.1100.10">
    <property type="match status" value="2"/>
</dbReference>
<dbReference type="Gene3D" id="6.10.140.1670">
    <property type="match status" value="1"/>
</dbReference>
<dbReference type="Gene3D" id="2.30.150.10">
    <property type="entry name" value="DNA-directed RNA polymerase, beta subunit, external 1 domain"/>
    <property type="match status" value="1"/>
</dbReference>
<dbReference type="Gene3D" id="2.40.270.10">
    <property type="entry name" value="DNA-directed RNA polymerase, subunit 2, domain 6"/>
    <property type="match status" value="1"/>
</dbReference>
<dbReference type="Gene3D" id="3.90.1800.10">
    <property type="entry name" value="RNA polymerase alpha subunit dimerisation domain"/>
    <property type="match status" value="1"/>
</dbReference>
<dbReference type="HAMAP" id="MF_01321">
    <property type="entry name" value="RNApol_bact_RpoB"/>
    <property type="match status" value="1"/>
</dbReference>
<dbReference type="InterPro" id="IPR042107">
    <property type="entry name" value="DNA-dir_RNA_pol_bsu_ext_1_sf"/>
</dbReference>
<dbReference type="InterPro" id="IPR019462">
    <property type="entry name" value="DNA-dir_RNA_pol_bsu_external_1"/>
</dbReference>
<dbReference type="InterPro" id="IPR015712">
    <property type="entry name" value="DNA-dir_RNA_pol_su2"/>
</dbReference>
<dbReference type="InterPro" id="IPR007120">
    <property type="entry name" value="DNA-dir_RNAP_su2_dom"/>
</dbReference>
<dbReference type="InterPro" id="IPR037033">
    <property type="entry name" value="DNA-dir_RNAP_su2_hyb_sf"/>
</dbReference>
<dbReference type="InterPro" id="IPR010243">
    <property type="entry name" value="RNA_pol_bsu_bac"/>
</dbReference>
<dbReference type="InterPro" id="IPR007121">
    <property type="entry name" value="RNA_pol_bsu_CS"/>
</dbReference>
<dbReference type="InterPro" id="IPR007644">
    <property type="entry name" value="RNA_pol_bsu_protrusion"/>
</dbReference>
<dbReference type="InterPro" id="IPR007642">
    <property type="entry name" value="RNA_pol_Rpb2_2"/>
</dbReference>
<dbReference type="InterPro" id="IPR007645">
    <property type="entry name" value="RNA_pol_Rpb2_3"/>
</dbReference>
<dbReference type="InterPro" id="IPR007641">
    <property type="entry name" value="RNA_pol_Rpb2_7"/>
</dbReference>
<dbReference type="InterPro" id="IPR014724">
    <property type="entry name" value="RNA_pol_RPB2_OB-fold"/>
</dbReference>
<dbReference type="NCBIfam" id="NF001616">
    <property type="entry name" value="PRK00405.1"/>
    <property type="match status" value="1"/>
</dbReference>
<dbReference type="NCBIfam" id="TIGR02013">
    <property type="entry name" value="rpoB"/>
    <property type="match status" value="1"/>
</dbReference>
<dbReference type="PANTHER" id="PTHR20856">
    <property type="entry name" value="DNA-DIRECTED RNA POLYMERASE I SUBUNIT 2"/>
    <property type="match status" value="1"/>
</dbReference>
<dbReference type="Pfam" id="PF04563">
    <property type="entry name" value="RNA_pol_Rpb2_1"/>
    <property type="match status" value="1"/>
</dbReference>
<dbReference type="Pfam" id="PF04561">
    <property type="entry name" value="RNA_pol_Rpb2_2"/>
    <property type="match status" value="2"/>
</dbReference>
<dbReference type="Pfam" id="PF04565">
    <property type="entry name" value="RNA_pol_Rpb2_3"/>
    <property type="match status" value="1"/>
</dbReference>
<dbReference type="Pfam" id="PF10385">
    <property type="entry name" value="RNA_pol_Rpb2_45"/>
    <property type="match status" value="1"/>
</dbReference>
<dbReference type="Pfam" id="PF00562">
    <property type="entry name" value="RNA_pol_Rpb2_6"/>
    <property type="match status" value="1"/>
</dbReference>
<dbReference type="Pfam" id="PF04560">
    <property type="entry name" value="RNA_pol_Rpb2_7"/>
    <property type="match status" value="1"/>
</dbReference>
<dbReference type="SUPFAM" id="SSF64484">
    <property type="entry name" value="beta and beta-prime subunits of DNA dependent RNA-polymerase"/>
    <property type="match status" value="1"/>
</dbReference>
<dbReference type="PROSITE" id="PS01166">
    <property type="entry name" value="RNA_POL_BETA"/>
    <property type="match status" value="1"/>
</dbReference>
<protein>
    <recommendedName>
        <fullName evidence="1">DNA-directed RNA polymerase subunit beta</fullName>
        <shortName evidence="1">RNAP subunit beta</shortName>
        <ecNumber evidence="1">2.7.7.6</ecNumber>
    </recommendedName>
    <alternativeName>
        <fullName evidence="1">RNA polymerase subunit beta</fullName>
    </alternativeName>
    <alternativeName>
        <fullName evidence="1">Transcriptase subunit beta</fullName>
    </alternativeName>
</protein>
<name>RPOB_ACIF2</name>
<gene>
    <name evidence="1" type="primary">rpoB</name>
    <name type="ordered locus">AFE_0320</name>
</gene>
<reference key="1">
    <citation type="journal article" date="2008" name="BMC Genomics">
        <title>Acidithiobacillus ferrooxidans metabolism: from genome sequence to industrial applications.</title>
        <authorList>
            <person name="Valdes J."/>
            <person name="Pedroso I."/>
            <person name="Quatrini R."/>
            <person name="Dodson R.J."/>
            <person name="Tettelin H."/>
            <person name="Blake R. II"/>
            <person name="Eisen J.A."/>
            <person name="Holmes D.S."/>
        </authorList>
    </citation>
    <scope>NUCLEOTIDE SEQUENCE [LARGE SCALE GENOMIC DNA]</scope>
    <source>
        <strain>ATCC 23270 / DSM 14882 / CIP 104768 / NCIMB 8455</strain>
    </source>
</reference>
<evidence type="ECO:0000255" key="1">
    <source>
        <dbReference type="HAMAP-Rule" id="MF_01321"/>
    </source>
</evidence>
<feature type="chain" id="PRO_1000141652" description="DNA-directed RNA polymerase subunit beta">
    <location>
        <begin position="1"/>
        <end position="1362"/>
    </location>
</feature>
<proteinExistence type="inferred from homology"/>